<sequence length="859" mass="94790">MYILVWKKGQQIKTFHTLDEAAQFKAASNIDEAQMFSVTVASAISASGGSTEATNLRRLMYLSKSTNPEECNPQFLAEMARVAFIRNREIRVSGFLMYSSPFFIQVIVETDEDLDFLFAKISADPRHEMCIVLANGPGTGRMYGDWHMKDSHLDSITTHTAMKTILYQIARSFSSMWIYLQKSAANMLMLGKDPAAQPPERRSVVVTFIYLVEFCSIFSHPNLTEKTADVLSTFVYVCVKNVEGSGGNIAKFIPAICMTYWPIIRTKEALTAIQQISEDLAQLRSQQAQGSAVSLRYSQAGVHYGRGMQCNAGSRKSDFTLLGDCINTTSRIATLAKKLKTPLLFGFEVRCLLGDEKREEIEGAGIHQVKGRDKPVVVYQFPGPDLDVAMVRQKIEQFTPGRFRCQMPVVEYEALPISQRPPIFDDTPKSNPRPRTPGYGGRQRSDSLVDRLIRIANLSGFSESATGDTTLTTLTYISQATRPMSRLDLSAIMPTATRRNAQQSNIGTVLHENGLFVQTLEGPKDAVVNLYLRIRQDPRHTDVTTVHMAPLQERVYTSEWTLTLATEEMLATFPPVQDVLSQLAKSYTSLETYVPSTVVRYLTAGNNPRNLMPVSCGVVMLATDISSFTSLTEISSFTEVWMICNTFIDACTSAICQEGGEVIKLIGDCVTPYFPGNNADLAVAAAQELFIFCRQLREAFVDVLDVRGCVSCAVGMDYGQVVMAQCGLLRLSDYVAAGAVSAGVVEVEAITREVGYQFVVTVPDADRVQPQFRDYGIEPTPQAIGGLPCYGIVREVFDLPVESIKRGIKAMHAARSGEQPLTEPEQAKPDFRVSPGRDRHGVSGRRSNSSQGKGSIQVG</sequence>
<protein>
    <recommendedName>
        <fullName>Photoactivated adenylate cyclase subunit beta-like protein ST-</fullName>
    </recommendedName>
</protein>
<name>PBLST_EUGGR</name>
<accession>P84743</accession>
<accession>Q2P9M4</accession>
<evidence type="ECO:0000250" key="1">
    <source>
        <dbReference type="UniProtKB" id="Q8S9F1"/>
    </source>
</evidence>
<evidence type="ECO:0000255" key="2">
    <source>
        <dbReference type="PROSITE-ProRule" id="PRU00030"/>
    </source>
</evidence>
<evidence type="ECO:0000256" key="3">
    <source>
        <dbReference type="SAM" id="MobiDB-lite"/>
    </source>
</evidence>
<evidence type="ECO:0000269" key="4">
    <source>
    </source>
</evidence>
<evidence type="ECO:0000305" key="5"/>
<evidence type="ECO:0000312" key="6">
    <source>
        <dbReference type="EMBL" id="CAJ57400.1"/>
    </source>
</evidence>
<keyword id="KW-0966">Cell projection</keyword>
<keyword id="KW-0969">Cilium</keyword>
<keyword id="KW-0282">Flagellum</keyword>
<keyword id="KW-0677">Repeat</keyword>
<feature type="chain" id="PRO_0000195725" description="Photoactivated adenylate cyclase subunit beta-like protein ST-">
    <location>
        <begin position="1"/>
        <end position="859"/>
    </location>
</feature>
<feature type="domain" description="BLUF 1" evidence="2">
    <location>
        <begin position="56"/>
        <end position="149"/>
    </location>
</feature>
<feature type="domain" description="BLUF 2" evidence="2">
    <location>
        <begin position="471"/>
        <end position="563"/>
    </location>
</feature>
<feature type="region of interest" description="Disordered" evidence="3">
    <location>
        <begin position="420"/>
        <end position="444"/>
    </location>
</feature>
<feature type="region of interest" description="Disordered" evidence="3">
    <location>
        <begin position="814"/>
        <end position="859"/>
    </location>
</feature>
<feature type="compositionally biased region" description="Basic and acidic residues" evidence="3">
    <location>
        <begin position="825"/>
        <end position="841"/>
    </location>
</feature>
<feature type="compositionally biased region" description="Polar residues" evidence="3">
    <location>
        <begin position="845"/>
        <end position="859"/>
    </location>
</feature>
<gene>
    <name evidence="6" type="primary">pacB</name>
</gene>
<proteinExistence type="evidence at transcript level"/>
<organism>
    <name type="scientific">Euglena gracilis</name>
    <dbReference type="NCBI Taxonomy" id="3039"/>
    <lineage>
        <taxon>Eukaryota</taxon>
        <taxon>Discoba</taxon>
        <taxon>Euglenozoa</taxon>
        <taxon>Euglenida</taxon>
        <taxon>Spirocuta</taxon>
        <taxon>Euglenophyceae</taxon>
        <taxon>Euglenales</taxon>
        <taxon>Euglenaceae</taxon>
        <taxon>Euglena</taxon>
    </lineage>
</organism>
<comment type="subunit">
    <text evidence="1">Heterotetramer of two alpha and two beta subunits.</text>
</comment>
<comment type="subcellular location">
    <subcellularLocation>
        <location evidence="4">Cell projection</location>
        <location evidence="4">Cilium</location>
        <location evidence="4">Flagellum</location>
    </subcellularLocation>
</comment>
<comment type="miscellaneous">
    <text>The ST- strain is deficient in phototaxis. It is not known if this is due to defective adenylate cyclase activity or defective BLUF domains in this protein. In wild-type E.gracilis, photoactivated adenylate cyclase is found in the paraxonemal bodies (PABs). PABs are absent from this strain.</text>
</comment>
<reference evidence="5 6" key="1">
    <citation type="journal article" date="2005" name="Photochem. Photobiol. Sci.">
        <title>Photoactivated adenylyl cyclase (PAC) genes in the flagellate Euglena gracilis mutant strains.</title>
        <authorList>
            <person name="Ntefidou M."/>
            <person name="Haeder D.-P."/>
        </authorList>
    </citation>
    <scope>NUCLEOTIDE SEQUENCE [MRNA]</scope>
    <scope>SUBCELLULAR LOCATION</scope>
    <source>
        <strain evidence="4">ST-</strain>
    </source>
</reference>
<dbReference type="EMBL" id="AM181341">
    <property type="protein sequence ID" value="CAJ57400.1"/>
    <property type="molecule type" value="mRNA"/>
</dbReference>
<dbReference type="SMR" id="P84743"/>
<dbReference type="GO" id="GO:0031514">
    <property type="term" value="C:motile cilium"/>
    <property type="evidence" value="ECO:0000314"/>
    <property type="project" value="UniProtKB"/>
</dbReference>
<dbReference type="GO" id="GO:0009882">
    <property type="term" value="F:blue light photoreceptor activity"/>
    <property type="evidence" value="ECO:0007669"/>
    <property type="project" value="InterPro"/>
</dbReference>
<dbReference type="GO" id="GO:0071949">
    <property type="term" value="F:FAD binding"/>
    <property type="evidence" value="ECO:0007669"/>
    <property type="project" value="InterPro"/>
</dbReference>
<dbReference type="GO" id="GO:0009190">
    <property type="term" value="P:cyclic nucleotide biosynthetic process"/>
    <property type="evidence" value="ECO:0007669"/>
    <property type="project" value="InterPro"/>
</dbReference>
<dbReference type="CDD" id="cd07302">
    <property type="entry name" value="CHD"/>
    <property type="match status" value="2"/>
</dbReference>
<dbReference type="FunFam" id="3.30.70.1230:FF:000065">
    <property type="entry name" value="Photoactivated adenylate cyclase subunit alpha-like protein ST"/>
    <property type="match status" value="1"/>
</dbReference>
<dbReference type="FunFam" id="3.30.70.100:FF:000061">
    <property type="entry name" value="Photoactivated adenylate cyclase subunit beta-like protein 1224-5/1F"/>
    <property type="match status" value="1"/>
</dbReference>
<dbReference type="FunFam" id="3.30.70.1230:FF:000058">
    <property type="entry name" value="Photoactivated adenylate cyclase subunit beta-like protein FB"/>
    <property type="match status" value="1"/>
</dbReference>
<dbReference type="FunFam" id="3.30.70.100:FF:000064">
    <property type="entry name" value="Photoactivated adenylate cyclase subunit beta-like protein ST"/>
    <property type="match status" value="1"/>
</dbReference>
<dbReference type="Gene3D" id="3.30.70.100">
    <property type="match status" value="2"/>
</dbReference>
<dbReference type="Gene3D" id="3.30.70.1230">
    <property type="entry name" value="Nucleotide cyclase"/>
    <property type="match status" value="2"/>
</dbReference>
<dbReference type="InterPro" id="IPR001054">
    <property type="entry name" value="A/G_cyclase"/>
</dbReference>
<dbReference type="InterPro" id="IPR036046">
    <property type="entry name" value="Acylphosphatase-like_dom_sf"/>
</dbReference>
<dbReference type="InterPro" id="IPR050697">
    <property type="entry name" value="Adenylyl/Guanylyl_Cyclase_3/4"/>
</dbReference>
<dbReference type="InterPro" id="IPR007024">
    <property type="entry name" value="BLUF_domain"/>
</dbReference>
<dbReference type="InterPro" id="IPR029787">
    <property type="entry name" value="Nucleotide_cyclase"/>
</dbReference>
<dbReference type="PANTHER" id="PTHR43081:SF1">
    <property type="entry name" value="ADENYLATE CYCLASE, TERMINAL-DIFFERENTIATION SPECIFIC"/>
    <property type="match status" value="1"/>
</dbReference>
<dbReference type="PANTHER" id="PTHR43081">
    <property type="entry name" value="ADENYLATE CYCLASE, TERMINAL-DIFFERENTIATION SPECIFIC-RELATED"/>
    <property type="match status" value="1"/>
</dbReference>
<dbReference type="Pfam" id="PF04940">
    <property type="entry name" value="BLUF"/>
    <property type="match status" value="2"/>
</dbReference>
<dbReference type="SMART" id="SM01034">
    <property type="entry name" value="BLUF"/>
    <property type="match status" value="2"/>
</dbReference>
<dbReference type="SUPFAM" id="SSF54975">
    <property type="entry name" value="Acylphosphatase/BLUF domain-like"/>
    <property type="match status" value="2"/>
</dbReference>
<dbReference type="SUPFAM" id="SSF55073">
    <property type="entry name" value="Nucleotide cyclase"/>
    <property type="match status" value="2"/>
</dbReference>
<dbReference type="PROSITE" id="PS50925">
    <property type="entry name" value="BLUF"/>
    <property type="match status" value="2"/>
</dbReference>